<name>CTHL6_BOVIN</name>
<dbReference type="EMBL" id="X97608">
    <property type="protein sequence ID" value="CAA66207.1"/>
    <property type="molecule type" value="mRNA"/>
</dbReference>
<dbReference type="EMBL" id="EU751305">
    <property type="protein sequence ID" value="ACI31927.1"/>
    <property type="molecule type" value="Genomic_DNA"/>
</dbReference>
<dbReference type="EMBL" id="EU751306">
    <property type="protein sequence ID" value="ACI31928.1"/>
    <property type="molecule type" value="Genomic_DNA"/>
</dbReference>
<dbReference type="EMBL" id="EU751311">
    <property type="protein sequence ID" value="ACI31933.1"/>
    <property type="molecule type" value="Genomic_DNA"/>
</dbReference>
<dbReference type="RefSeq" id="NP_777257.1">
    <property type="nucleotide sequence ID" value="NM_174832.3"/>
</dbReference>
<dbReference type="PDB" id="2KET">
    <property type="method" value="NMR"/>
    <property type="chains" value="A=132-157"/>
</dbReference>
<dbReference type="PDBsum" id="2KET"/>
<dbReference type="SMR" id="P54228"/>
<dbReference type="FunCoup" id="P54228">
    <property type="interactions" value="196"/>
</dbReference>
<dbReference type="STRING" id="9913.ENSBTAP00000056939"/>
<dbReference type="TCDB" id="1.C.33.1.11">
    <property type="family name" value="the cathelicidin (cathelicidin) family"/>
</dbReference>
<dbReference type="PaxDb" id="9913-ENSBTAP00000042250"/>
<dbReference type="PeptideAtlas" id="P54228"/>
<dbReference type="GeneID" id="317651"/>
<dbReference type="KEGG" id="bta:317651"/>
<dbReference type="CTD" id="317651"/>
<dbReference type="VEuPathDB" id="HostDB:ENSBTAG00000049629"/>
<dbReference type="eggNOG" id="ENOG502SAES">
    <property type="taxonomic scope" value="Eukaryota"/>
</dbReference>
<dbReference type="HOGENOM" id="CLU_121724_1_1_1"/>
<dbReference type="InParanoid" id="P54228"/>
<dbReference type="OMA" id="IMETVCP"/>
<dbReference type="OrthoDB" id="9930485at2759"/>
<dbReference type="TreeFam" id="TF338457"/>
<dbReference type="Proteomes" id="UP000009136">
    <property type="component" value="Chromosome 22"/>
</dbReference>
<dbReference type="Bgee" id="ENSBTAG00000049629">
    <property type="expression patterns" value="Expressed in thymus and 17 other cell types or tissues"/>
</dbReference>
<dbReference type="GO" id="GO:0005615">
    <property type="term" value="C:extracellular space"/>
    <property type="evidence" value="ECO:0000318"/>
    <property type="project" value="GO_Central"/>
</dbReference>
<dbReference type="GO" id="GO:0001530">
    <property type="term" value="F:lipopolysaccharide binding"/>
    <property type="evidence" value="ECO:0000318"/>
    <property type="project" value="GO_Central"/>
</dbReference>
<dbReference type="GO" id="GO:0061844">
    <property type="term" value="P:antimicrobial humoral immune response mediated by antimicrobial peptide"/>
    <property type="evidence" value="ECO:0000318"/>
    <property type="project" value="GO_Central"/>
</dbReference>
<dbReference type="GO" id="GO:0050832">
    <property type="term" value="P:defense response to fungus"/>
    <property type="evidence" value="ECO:0007669"/>
    <property type="project" value="UniProtKB-KW"/>
</dbReference>
<dbReference type="GO" id="GO:0050829">
    <property type="term" value="P:defense response to Gram-negative bacterium"/>
    <property type="evidence" value="ECO:0000318"/>
    <property type="project" value="GO_Central"/>
</dbReference>
<dbReference type="GO" id="GO:0050830">
    <property type="term" value="P:defense response to Gram-positive bacterium"/>
    <property type="evidence" value="ECO:0000318"/>
    <property type="project" value="GO_Central"/>
</dbReference>
<dbReference type="GO" id="GO:0045087">
    <property type="term" value="P:innate immune response"/>
    <property type="evidence" value="ECO:0000318"/>
    <property type="project" value="GO_Central"/>
</dbReference>
<dbReference type="GO" id="GO:0031640">
    <property type="term" value="P:killing of cells of another organism"/>
    <property type="evidence" value="ECO:0007669"/>
    <property type="project" value="UniProtKB-KW"/>
</dbReference>
<dbReference type="FunFam" id="3.10.450.10:FF:000003">
    <property type="entry name" value="Cathelicidin antimicrobial peptide"/>
    <property type="match status" value="1"/>
</dbReference>
<dbReference type="Gene3D" id="3.10.450.10">
    <property type="match status" value="1"/>
</dbReference>
<dbReference type="InterPro" id="IPR001894">
    <property type="entry name" value="Cathelicidin-like"/>
</dbReference>
<dbReference type="InterPro" id="IPR018216">
    <property type="entry name" value="Cathelicidin_CS"/>
</dbReference>
<dbReference type="InterPro" id="IPR046350">
    <property type="entry name" value="Cystatin_sf"/>
</dbReference>
<dbReference type="PANTHER" id="PTHR10206">
    <property type="entry name" value="CATHELICIDIN"/>
    <property type="match status" value="1"/>
</dbReference>
<dbReference type="PANTHER" id="PTHR10206:SF2">
    <property type="entry name" value="CATHELICIDIN ANTIMICROBIAL PEPTIDE"/>
    <property type="match status" value="1"/>
</dbReference>
<dbReference type="Pfam" id="PF00666">
    <property type="entry name" value="Cathelicidins"/>
    <property type="match status" value="1"/>
</dbReference>
<dbReference type="SUPFAM" id="SSF54403">
    <property type="entry name" value="Cystatin/monellin"/>
    <property type="match status" value="1"/>
</dbReference>
<dbReference type="PROSITE" id="PS00946">
    <property type="entry name" value="CATHELICIDINS_1"/>
    <property type="match status" value="1"/>
</dbReference>
<dbReference type="PROSITE" id="PS00947">
    <property type="entry name" value="CATHELICIDINS_2"/>
    <property type="match status" value="1"/>
</dbReference>
<sequence length="158" mass="17852">METQRASLSLGRWSLWLLLLGLALPSASAQALSYREAVLRAVDQFNERSSEANLYRLLELDPPPKEDDENPNIPKPVSFRVKETVCPRTSQQPAEQCDFKENGLVKQCVGTVTLDAVKGKINVTCEELQSVGRFKRFRKKFKKLFKKLSPVIPLLHLG</sequence>
<proteinExistence type="evidence at protein level"/>
<reference key="1">
    <citation type="journal article" date="1996" name="J. Biol. Chem.">
        <title>Biological characterization of two novel cathelicidin-derived peptides and identification of structural requirements for their antimicrobial and cell lytic activities.</title>
        <authorList>
            <person name="Skerlavaj B."/>
            <person name="Gennaro R."/>
            <person name="Bagella L."/>
            <person name="Merluzzi L."/>
            <person name="Risso A."/>
            <person name="Zanetti M."/>
        </authorList>
    </citation>
    <scope>NUCLEOTIDE SEQUENCE [MRNA]</scope>
</reference>
<reference key="2">
    <citation type="journal article" date="2009" name="J. Hered.">
        <title>Sequence analysis and polymorphism discovery in 4 members of the bovine cathelicidin gene family.</title>
        <authorList>
            <person name="Gillenwaters E.N."/>
            <person name="Seabury C.M."/>
            <person name="Elliott J.S."/>
            <person name="Womack J.E."/>
        </authorList>
    </citation>
    <scope>NUCLEOTIDE SEQUENCE [GENOMIC DNA]</scope>
    <source>
        <strain>Isolate 44</strain>
        <strain>Isolate 74</strain>
        <strain>Isolate JEW38</strain>
    </source>
</reference>
<accession>P54228</accession>
<accession>B9UKM5</accession>
<evidence type="ECO:0000250" key="1"/>
<evidence type="ECO:0000255" key="2"/>
<evidence type="ECO:0000305" key="3"/>
<evidence type="ECO:0007829" key="4">
    <source>
        <dbReference type="PDB" id="2KET"/>
    </source>
</evidence>
<organism>
    <name type="scientific">Bos taurus</name>
    <name type="common">Bovine</name>
    <dbReference type="NCBI Taxonomy" id="9913"/>
    <lineage>
        <taxon>Eukaryota</taxon>
        <taxon>Metazoa</taxon>
        <taxon>Chordata</taxon>
        <taxon>Craniata</taxon>
        <taxon>Vertebrata</taxon>
        <taxon>Euteleostomi</taxon>
        <taxon>Mammalia</taxon>
        <taxon>Eutheria</taxon>
        <taxon>Laurasiatheria</taxon>
        <taxon>Artiodactyla</taxon>
        <taxon>Ruminantia</taxon>
        <taxon>Pecora</taxon>
        <taxon>Bovidae</taxon>
        <taxon>Bovinae</taxon>
        <taxon>Bos</taxon>
    </lineage>
</organism>
<protein>
    <recommendedName>
        <fullName>Cathelicidin-6</fullName>
    </recommendedName>
    <alternativeName>
        <fullName>Antibacterial peptide BMAP-27</fullName>
    </alternativeName>
    <alternativeName>
        <fullName>Myeloid antibacterial peptide 27</fullName>
    </alternativeName>
</protein>
<comment type="function">
    <text>Exerts a potent antimicrobial activity against Gram-negative and Gram-positive bacteria, including methicillin-resistant Staphylococcus aureus, and fungi.</text>
</comment>
<comment type="subcellular location">
    <subcellularLocation>
        <location>Secreted</location>
    </subcellularLocation>
</comment>
<comment type="similarity">
    <text evidence="3">Belongs to the cathelicidin family.</text>
</comment>
<keyword id="KW-0002">3D-structure</keyword>
<keyword id="KW-0044">Antibiotic</keyword>
<keyword id="KW-0929">Antimicrobial</keyword>
<keyword id="KW-1015">Disulfide bond</keyword>
<keyword id="KW-0295">Fungicide</keyword>
<keyword id="KW-1185">Reference proteome</keyword>
<keyword id="KW-0964">Secreted</keyword>
<keyword id="KW-0732">Signal</keyword>
<gene>
    <name type="primary">CATHL6</name>
    <name type="synonym">BMAP27</name>
</gene>
<feature type="signal peptide" evidence="2">
    <location>
        <begin position="1"/>
        <end position="29"/>
    </location>
</feature>
<feature type="propeptide" id="PRO_0000004714" evidence="2">
    <location>
        <begin position="30"/>
        <end position="131"/>
    </location>
</feature>
<feature type="peptide" id="PRO_0000004715" description="Cathelicidin-6">
    <location>
        <begin position="132"/>
        <end position="158"/>
    </location>
</feature>
<feature type="disulfide bond" evidence="1">
    <location>
        <begin position="86"/>
        <end position="97"/>
    </location>
</feature>
<feature type="disulfide bond" evidence="1">
    <location>
        <begin position="108"/>
        <end position="125"/>
    </location>
</feature>
<feature type="helix" evidence="4">
    <location>
        <begin position="134"/>
        <end position="148"/>
    </location>
</feature>
<feature type="helix" evidence="4">
    <location>
        <begin position="153"/>
        <end position="156"/>
    </location>
</feature>